<evidence type="ECO:0000255" key="1">
    <source>
        <dbReference type="HAMAP-Rule" id="MF_04023"/>
    </source>
</evidence>
<accession>P0CK48</accession>
<accession>P03183</accession>
<accession>Q777G9</accession>
<reference key="1">
    <citation type="journal article" date="2006" name="Virology">
        <title>The genome of Epstein-Barr virus type 2 strain AG876.</title>
        <authorList>
            <person name="Dolan A."/>
            <person name="Addison C."/>
            <person name="Gatherer D."/>
            <person name="Davison A.J."/>
            <person name="McGeoch D.J."/>
        </authorList>
    </citation>
    <scope>NUCLEOTIDE SEQUENCE [LARGE SCALE GENOMIC DNA]</scope>
</reference>
<feature type="chain" id="PRO_0000415966" description="Nuclear egress protein 1">
    <location>
        <begin position="1"/>
        <end position="318"/>
    </location>
</feature>
<feature type="zinc finger region" description="CCCH-type" evidence="1">
    <location>
        <begin position="129"/>
        <end position="239"/>
    </location>
</feature>
<sequence>MAPVTPDAVNARQQRPADPALRRLMHPHHRNYTASKASAHSVKSVSRCGKSRSELGRMERVGSVARSICSRHTRHGVDRSHFSLRDFFRGISANFELGKDFLREMNTPIHVSEAVFLPLSLCTLSPGRCLRLSPFGHSLTLGSHCEICINRSQVHVPQEFSSTQLSFFNNVHKIIPNKTFYVSLLSSSPSAVKAGLSQPSLLYAYLVTGHFCGTICPIFSTNGKGRLIMHLLLQGTSLHIPETCLKLLCENIGPTYELAVDLVGDAFCIKVSPRDTVYEKAVNVDEDAIYEAIKDLECGDELRLQIINYTQLILENKQ</sequence>
<keyword id="KW-1043">Host membrane</keyword>
<keyword id="KW-1048">Host nucleus</keyword>
<keyword id="KW-0472">Membrane</keyword>
<keyword id="KW-0479">Metal-binding</keyword>
<keyword id="KW-0597">Phosphoprotein</keyword>
<keyword id="KW-1185">Reference proteome</keyword>
<keyword id="KW-0862">Zinc</keyword>
<keyword id="KW-0863">Zinc-finger</keyword>
<comment type="function">
    <text evidence="1">Plays an essential role in virion nuclear egress, the first step of virion release from infected cell. Within the host nucleus, NEC1 interacts with the newly formed capsid through the vertexes and directs it to the inner nuclear membrane by associating with NEC2. Induces the budding of the capsid at the inner nuclear membrane as well as its envelopment into the perinuclear space. There, the NEC1/NEC2 complex promotes the fusion of the enveloped capsid with the outer nuclear membrane and the subsequent release of the viral capsid into the cytoplasm where it will reach the secondary budding sites in the host Golgi or trans-Golgi network.</text>
</comment>
<comment type="subunit">
    <text evidence="1">Forms a heterodimeric viral nuclear egress complex (NEC) with NEC2. Interacts with capsid vertex specific component 2/CVC2; this interaction directs the capsid to the host inner nuclear membrane to initiate budding.</text>
</comment>
<comment type="subcellular location">
    <subcellularLocation>
        <location evidence="1">Host nucleus inner membrane</location>
    </subcellularLocation>
    <text evidence="1">Remains attached to the nucleus inner membrane through interaction with NEC2.</text>
</comment>
<comment type="PTM">
    <text evidence="1">Phosphorylated at serine residues in the N-terminus. This phosphorylation regulates the localization within the inner nuclear membrane.</text>
</comment>
<comment type="similarity">
    <text evidence="1">Belongs to the herpesviridae NEC1 protein family.</text>
</comment>
<protein>
    <recommendedName>
        <fullName evidence="1">Nuclear egress protein 1</fullName>
    </recommendedName>
</protein>
<gene>
    <name evidence="1" type="primary">NEC1</name>
    <name type="ORF">BFLF2</name>
</gene>
<organismHost>
    <name type="scientific">Homo sapiens</name>
    <name type="common">Human</name>
    <dbReference type="NCBI Taxonomy" id="9606"/>
</organismHost>
<dbReference type="EMBL" id="DQ279927">
    <property type="protein sequence ID" value="ABB89218.1"/>
    <property type="molecule type" value="Genomic_DNA"/>
</dbReference>
<dbReference type="RefSeq" id="YP_001129443.1">
    <property type="nucleotide sequence ID" value="NC_009334.1"/>
</dbReference>
<dbReference type="RefSeq" id="YP_401647.1">
    <property type="nucleotide sequence ID" value="NC_007605.1"/>
</dbReference>
<dbReference type="SMR" id="P0CK48"/>
<dbReference type="IntAct" id="P0CK48">
    <property type="interactions" value="11"/>
</dbReference>
<dbReference type="MINT" id="P0CK48"/>
<dbReference type="DNASU" id="3783698"/>
<dbReference type="GeneID" id="3783698"/>
<dbReference type="KEGG" id="vg:3783698"/>
<dbReference type="KEGG" id="vg:5176194"/>
<dbReference type="Proteomes" id="UP000007639">
    <property type="component" value="Genome"/>
</dbReference>
<dbReference type="GO" id="GO:0044201">
    <property type="term" value="C:host cell nuclear inner membrane"/>
    <property type="evidence" value="ECO:0007669"/>
    <property type="project" value="UniProtKB-SubCell"/>
</dbReference>
<dbReference type="GO" id="GO:0016020">
    <property type="term" value="C:membrane"/>
    <property type="evidence" value="ECO:0007669"/>
    <property type="project" value="UniProtKB-KW"/>
</dbReference>
<dbReference type="GO" id="GO:0008270">
    <property type="term" value="F:zinc ion binding"/>
    <property type="evidence" value="ECO:0007669"/>
    <property type="project" value="UniProtKB-KW"/>
</dbReference>
<dbReference type="GO" id="GO:0046765">
    <property type="term" value="P:viral budding from nuclear membrane"/>
    <property type="evidence" value="ECO:0007669"/>
    <property type="project" value="InterPro"/>
</dbReference>
<dbReference type="HAMAP" id="MF_04023">
    <property type="entry name" value="HSV_NEC1"/>
    <property type="match status" value="1"/>
</dbReference>
<dbReference type="InterPro" id="IPR021152">
    <property type="entry name" value="Herpes_UL31"/>
</dbReference>
<dbReference type="Pfam" id="PF02718">
    <property type="entry name" value="Herpes_UL31"/>
    <property type="match status" value="1"/>
</dbReference>
<name>NEC1_EBVA8</name>
<organism>
    <name type="scientific">Epstein-Barr virus (strain AG876)</name>
    <name type="common">HHV-4</name>
    <name type="synonym">Human herpesvirus 4</name>
    <dbReference type="NCBI Taxonomy" id="82830"/>
    <lineage>
        <taxon>Viruses</taxon>
        <taxon>Duplodnaviria</taxon>
        <taxon>Heunggongvirae</taxon>
        <taxon>Peploviricota</taxon>
        <taxon>Herviviricetes</taxon>
        <taxon>Herpesvirales</taxon>
        <taxon>Orthoherpesviridae</taxon>
        <taxon>Gammaherpesvirinae</taxon>
        <taxon>Lymphocryptovirus</taxon>
        <taxon>Lymphocryptovirus humangamma4</taxon>
        <taxon>Epstein-Barr virus (strain GD1)</taxon>
    </lineage>
</organism>
<proteinExistence type="inferred from homology"/>